<comment type="function">
    <text evidence="1">Catalyzes the deamination of dCTP to dUTP.</text>
</comment>
<comment type="catalytic activity">
    <reaction evidence="1">
        <text>dCTP + H2O + H(+) = dUTP + NH4(+)</text>
        <dbReference type="Rhea" id="RHEA:22680"/>
        <dbReference type="ChEBI" id="CHEBI:15377"/>
        <dbReference type="ChEBI" id="CHEBI:15378"/>
        <dbReference type="ChEBI" id="CHEBI:28938"/>
        <dbReference type="ChEBI" id="CHEBI:61481"/>
        <dbReference type="ChEBI" id="CHEBI:61555"/>
        <dbReference type="EC" id="3.5.4.13"/>
    </reaction>
</comment>
<comment type="pathway">
    <text evidence="1">Pyrimidine metabolism; dUMP biosynthesis; dUMP from dCTP (dUTP route): step 1/2.</text>
</comment>
<comment type="subunit">
    <text evidence="1">Homotrimer.</text>
</comment>
<comment type="similarity">
    <text evidence="1">Belongs to the dCTP deaminase family.</text>
</comment>
<keyword id="KW-0378">Hydrolase</keyword>
<keyword id="KW-0546">Nucleotide metabolism</keyword>
<keyword id="KW-0547">Nucleotide-binding</keyword>
<keyword id="KW-1185">Reference proteome</keyword>
<accession>A7I3J2</accession>
<protein>
    <recommendedName>
        <fullName evidence="1">dCTP deaminase</fullName>
        <ecNumber evidence="1">3.5.4.13</ecNumber>
    </recommendedName>
    <alternativeName>
        <fullName evidence="1">Deoxycytidine triphosphate deaminase</fullName>
    </alternativeName>
</protein>
<evidence type="ECO:0000255" key="1">
    <source>
        <dbReference type="HAMAP-Rule" id="MF_00146"/>
    </source>
</evidence>
<dbReference type="EC" id="3.5.4.13" evidence="1"/>
<dbReference type="EMBL" id="CP000776">
    <property type="protein sequence ID" value="ABS51590.1"/>
    <property type="molecule type" value="Genomic_DNA"/>
</dbReference>
<dbReference type="RefSeq" id="WP_012109388.1">
    <property type="nucleotide sequence ID" value="NC_009714.1"/>
</dbReference>
<dbReference type="SMR" id="A7I3J2"/>
<dbReference type="STRING" id="360107.CHAB381_1552"/>
<dbReference type="KEGG" id="cha:CHAB381_1552"/>
<dbReference type="eggNOG" id="COG0717">
    <property type="taxonomic scope" value="Bacteria"/>
</dbReference>
<dbReference type="HOGENOM" id="CLU_087476_4_0_7"/>
<dbReference type="OrthoDB" id="9780956at2"/>
<dbReference type="UniPathway" id="UPA00610">
    <property type="reaction ID" value="UER00665"/>
</dbReference>
<dbReference type="Proteomes" id="UP000002407">
    <property type="component" value="Chromosome"/>
</dbReference>
<dbReference type="GO" id="GO:0008829">
    <property type="term" value="F:dCTP deaminase activity"/>
    <property type="evidence" value="ECO:0007669"/>
    <property type="project" value="UniProtKB-UniRule"/>
</dbReference>
<dbReference type="GO" id="GO:0000166">
    <property type="term" value="F:nucleotide binding"/>
    <property type="evidence" value="ECO:0007669"/>
    <property type="project" value="UniProtKB-KW"/>
</dbReference>
<dbReference type="GO" id="GO:0006226">
    <property type="term" value="P:dUMP biosynthetic process"/>
    <property type="evidence" value="ECO:0007669"/>
    <property type="project" value="UniProtKB-UniPathway"/>
</dbReference>
<dbReference type="GO" id="GO:0006229">
    <property type="term" value="P:dUTP biosynthetic process"/>
    <property type="evidence" value="ECO:0007669"/>
    <property type="project" value="UniProtKB-UniRule"/>
</dbReference>
<dbReference type="GO" id="GO:0015949">
    <property type="term" value="P:nucleobase-containing small molecule interconversion"/>
    <property type="evidence" value="ECO:0007669"/>
    <property type="project" value="TreeGrafter"/>
</dbReference>
<dbReference type="CDD" id="cd07557">
    <property type="entry name" value="trimeric_dUTPase"/>
    <property type="match status" value="1"/>
</dbReference>
<dbReference type="FunFam" id="2.70.40.10:FF:000001">
    <property type="entry name" value="dCTP deaminase"/>
    <property type="match status" value="1"/>
</dbReference>
<dbReference type="Gene3D" id="2.70.40.10">
    <property type="match status" value="1"/>
</dbReference>
<dbReference type="HAMAP" id="MF_00146">
    <property type="entry name" value="dCTP_deaminase"/>
    <property type="match status" value="1"/>
</dbReference>
<dbReference type="InterPro" id="IPR011962">
    <property type="entry name" value="dCTP_deaminase"/>
</dbReference>
<dbReference type="InterPro" id="IPR036157">
    <property type="entry name" value="dUTPase-like_sf"/>
</dbReference>
<dbReference type="InterPro" id="IPR033704">
    <property type="entry name" value="dUTPase_trimeric"/>
</dbReference>
<dbReference type="NCBIfam" id="TIGR02274">
    <property type="entry name" value="dCTP_deam"/>
    <property type="match status" value="1"/>
</dbReference>
<dbReference type="PANTHER" id="PTHR42680">
    <property type="entry name" value="DCTP DEAMINASE"/>
    <property type="match status" value="1"/>
</dbReference>
<dbReference type="PANTHER" id="PTHR42680:SF3">
    <property type="entry name" value="DCTP DEAMINASE"/>
    <property type="match status" value="1"/>
</dbReference>
<dbReference type="Pfam" id="PF22769">
    <property type="entry name" value="DCD"/>
    <property type="match status" value="1"/>
</dbReference>
<dbReference type="SUPFAM" id="SSF51283">
    <property type="entry name" value="dUTPase-like"/>
    <property type="match status" value="1"/>
</dbReference>
<gene>
    <name evidence="1" type="primary">dcd</name>
    <name type="ordered locus">CHAB381_1552</name>
</gene>
<proteinExistence type="inferred from homology"/>
<reference key="1">
    <citation type="submission" date="2007-07" db="EMBL/GenBank/DDBJ databases">
        <title>Complete genome sequence of Campylobacter hominis ATCC BAA-381, a commensal isolated from the human gastrointestinal tract.</title>
        <authorList>
            <person name="Fouts D.E."/>
            <person name="Mongodin E.F."/>
            <person name="Puiu D."/>
            <person name="Sebastian Y."/>
            <person name="Miller W.G."/>
            <person name="Mandrell R.E."/>
            <person name="Nelson K.E."/>
        </authorList>
    </citation>
    <scope>NUCLEOTIDE SEQUENCE [LARGE SCALE GENOMIC DNA]</scope>
    <source>
        <strain>ATCC BAA-381 / DSM 21671 / CCUG 45161 / LMG 19568 / NCTC 13146 / CH001A</strain>
    </source>
</reference>
<sequence>MGLKSDKWIREQSIKNGMITPFCEENMGVGVVSYGLSSYGYDIRVADEFKIFTNVGGTVVDPKNFDEKNIVDFKGDVCIVPPNSFALARTIEYFKMPRDVLAICLGKSTYARCGIIVNVTPFEPGFEGHITIEISNTTPLPAKIYANEGIAQVLFLQGDEICEVSYADKKGKYQRQKGITLPRILEGDKK</sequence>
<feature type="chain" id="PRO_1000009701" description="dCTP deaminase">
    <location>
        <begin position="1"/>
        <end position="190"/>
    </location>
</feature>
<feature type="active site" description="Proton donor/acceptor" evidence="1">
    <location>
        <position position="133"/>
    </location>
</feature>
<feature type="binding site" evidence="1">
    <location>
        <begin position="107"/>
        <end position="112"/>
    </location>
    <ligand>
        <name>dCTP</name>
        <dbReference type="ChEBI" id="CHEBI:61481"/>
    </ligand>
</feature>
<feature type="binding site" evidence="1">
    <location>
        <position position="152"/>
    </location>
    <ligand>
        <name>dCTP</name>
        <dbReference type="ChEBI" id="CHEBI:61481"/>
    </ligand>
</feature>
<feature type="binding site" evidence="1">
    <location>
        <position position="166"/>
    </location>
    <ligand>
        <name>dCTP</name>
        <dbReference type="ChEBI" id="CHEBI:61481"/>
    </ligand>
</feature>
<feature type="binding site" evidence="1">
    <location>
        <position position="176"/>
    </location>
    <ligand>
        <name>dCTP</name>
        <dbReference type="ChEBI" id="CHEBI:61481"/>
    </ligand>
</feature>
<name>DCD_CAMHC</name>
<organism>
    <name type="scientific">Campylobacter hominis (strain ATCC BAA-381 / DSM 21671 / CCUG 45161 / LMG 19568 / NCTC 13146 / CH001A)</name>
    <dbReference type="NCBI Taxonomy" id="360107"/>
    <lineage>
        <taxon>Bacteria</taxon>
        <taxon>Pseudomonadati</taxon>
        <taxon>Campylobacterota</taxon>
        <taxon>Epsilonproteobacteria</taxon>
        <taxon>Campylobacterales</taxon>
        <taxon>Campylobacteraceae</taxon>
        <taxon>Campylobacter</taxon>
    </lineage>
</organism>